<comment type="catalytic activity">
    <reaction evidence="2">
        <text>tRNA(His) + L-histidine + ATP = L-histidyl-tRNA(His) + AMP + diphosphate + H(+)</text>
        <dbReference type="Rhea" id="RHEA:17313"/>
        <dbReference type="Rhea" id="RHEA-COMP:9665"/>
        <dbReference type="Rhea" id="RHEA-COMP:9689"/>
        <dbReference type="ChEBI" id="CHEBI:15378"/>
        <dbReference type="ChEBI" id="CHEBI:30616"/>
        <dbReference type="ChEBI" id="CHEBI:33019"/>
        <dbReference type="ChEBI" id="CHEBI:57595"/>
        <dbReference type="ChEBI" id="CHEBI:78442"/>
        <dbReference type="ChEBI" id="CHEBI:78527"/>
        <dbReference type="ChEBI" id="CHEBI:456215"/>
        <dbReference type="EC" id="6.1.1.21"/>
    </reaction>
</comment>
<comment type="subunit">
    <text evidence="2">Homodimer.</text>
</comment>
<comment type="subcellular location">
    <subcellularLocation>
        <location evidence="2">Cytoplasm</location>
    </subcellularLocation>
</comment>
<comment type="similarity">
    <text evidence="2">Belongs to the class-II aminoacyl-tRNA synthetase family.</text>
</comment>
<protein>
    <recommendedName>
        <fullName evidence="2">Histidine--tRNA ligase</fullName>
        <ecNumber evidence="2">6.1.1.21</ecNumber>
    </recommendedName>
    <alternativeName>
        <fullName evidence="2">Histidyl-tRNA synthetase</fullName>
        <shortName evidence="2">HisRS</shortName>
    </alternativeName>
</protein>
<evidence type="ECO:0000250" key="1"/>
<evidence type="ECO:0000255" key="2">
    <source>
        <dbReference type="HAMAP-Rule" id="MF_00127"/>
    </source>
</evidence>
<sequence>MAKNIQAIRGMNDYLPGETAIWQRIEGTLKNVLGSYGYSEIRLPIVEQTPLFKRAIGEVTDVVEKEMYTFEDRNGDSLTLRPEGTAGCVRAGIEHGLLYNQEQRLWYIGPMFRHERPQKGRYRQFHQLGAEVFGLQGPDIDAELIMLTARWWRALGISEHVSLELNSIGSLEARANYRDALVAFLEQHQETLDEDCKRRMYTNPLRVLDSKNPDVQALLNDAPVLGDYLDDDSREHFTGLCKLLDAAGIAYTVNQRLVRGLDYYNRTVFEWVTNSLGSQGTVCAGGRYDGLVEQLGGRATPAVGFAMGLERLVLLVQAVNPEFIASPVVDIYLVAAGAQTQSAAMTLAERLRDEMPGVKLMTNHGGGNFKKQFARADKWGARIALVLGESEVADGTVVVKDLRSGEQTAVAQDSVAAHLRTLLG</sequence>
<proteinExistence type="inferred from homology"/>
<accession>Q5PNI1</accession>
<dbReference type="EC" id="6.1.1.21" evidence="2"/>
<dbReference type="EMBL" id="CP000026">
    <property type="protein sequence ID" value="AAV76362.1"/>
    <property type="molecule type" value="Genomic_DNA"/>
</dbReference>
<dbReference type="RefSeq" id="WP_001107148.1">
    <property type="nucleotide sequence ID" value="NC_006511.1"/>
</dbReference>
<dbReference type="SMR" id="Q5PNI1"/>
<dbReference type="KEGG" id="spt:SPA0345"/>
<dbReference type="HOGENOM" id="CLU_025113_1_1_6"/>
<dbReference type="Proteomes" id="UP000008185">
    <property type="component" value="Chromosome"/>
</dbReference>
<dbReference type="GO" id="GO:0005737">
    <property type="term" value="C:cytoplasm"/>
    <property type="evidence" value="ECO:0007669"/>
    <property type="project" value="UniProtKB-SubCell"/>
</dbReference>
<dbReference type="GO" id="GO:0005524">
    <property type="term" value="F:ATP binding"/>
    <property type="evidence" value="ECO:0007669"/>
    <property type="project" value="UniProtKB-UniRule"/>
</dbReference>
<dbReference type="GO" id="GO:0004821">
    <property type="term" value="F:histidine-tRNA ligase activity"/>
    <property type="evidence" value="ECO:0007669"/>
    <property type="project" value="UniProtKB-UniRule"/>
</dbReference>
<dbReference type="GO" id="GO:0006427">
    <property type="term" value="P:histidyl-tRNA aminoacylation"/>
    <property type="evidence" value="ECO:0007669"/>
    <property type="project" value="UniProtKB-UniRule"/>
</dbReference>
<dbReference type="CDD" id="cd00773">
    <property type="entry name" value="HisRS-like_core"/>
    <property type="match status" value="1"/>
</dbReference>
<dbReference type="CDD" id="cd00859">
    <property type="entry name" value="HisRS_anticodon"/>
    <property type="match status" value="1"/>
</dbReference>
<dbReference type="FunFam" id="3.30.930.10:FF:000005">
    <property type="entry name" value="Histidine--tRNA ligase"/>
    <property type="match status" value="1"/>
</dbReference>
<dbReference type="FunFam" id="3.40.50.800:FF:000007">
    <property type="entry name" value="Histidine--tRNA ligase"/>
    <property type="match status" value="1"/>
</dbReference>
<dbReference type="Gene3D" id="3.40.50.800">
    <property type="entry name" value="Anticodon-binding domain"/>
    <property type="match status" value="1"/>
</dbReference>
<dbReference type="Gene3D" id="3.30.930.10">
    <property type="entry name" value="Bira Bifunctional Protein, Domain 2"/>
    <property type="match status" value="1"/>
</dbReference>
<dbReference type="HAMAP" id="MF_00127">
    <property type="entry name" value="His_tRNA_synth"/>
    <property type="match status" value="1"/>
</dbReference>
<dbReference type="InterPro" id="IPR006195">
    <property type="entry name" value="aa-tRNA-synth_II"/>
</dbReference>
<dbReference type="InterPro" id="IPR045864">
    <property type="entry name" value="aa-tRNA-synth_II/BPL/LPL"/>
</dbReference>
<dbReference type="InterPro" id="IPR004154">
    <property type="entry name" value="Anticodon-bd"/>
</dbReference>
<dbReference type="InterPro" id="IPR036621">
    <property type="entry name" value="Anticodon-bd_dom_sf"/>
</dbReference>
<dbReference type="InterPro" id="IPR015807">
    <property type="entry name" value="His-tRNA-ligase"/>
</dbReference>
<dbReference type="InterPro" id="IPR041715">
    <property type="entry name" value="HisRS-like_core"/>
</dbReference>
<dbReference type="InterPro" id="IPR004516">
    <property type="entry name" value="HisRS/HisZ"/>
</dbReference>
<dbReference type="InterPro" id="IPR033656">
    <property type="entry name" value="HisRS_anticodon"/>
</dbReference>
<dbReference type="NCBIfam" id="TIGR00442">
    <property type="entry name" value="hisS"/>
    <property type="match status" value="1"/>
</dbReference>
<dbReference type="PANTHER" id="PTHR43707:SF1">
    <property type="entry name" value="HISTIDINE--TRNA LIGASE, MITOCHONDRIAL-RELATED"/>
    <property type="match status" value="1"/>
</dbReference>
<dbReference type="PANTHER" id="PTHR43707">
    <property type="entry name" value="HISTIDYL-TRNA SYNTHETASE"/>
    <property type="match status" value="1"/>
</dbReference>
<dbReference type="Pfam" id="PF03129">
    <property type="entry name" value="HGTP_anticodon"/>
    <property type="match status" value="1"/>
</dbReference>
<dbReference type="Pfam" id="PF13393">
    <property type="entry name" value="tRNA-synt_His"/>
    <property type="match status" value="1"/>
</dbReference>
<dbReference type="PIRSF" id="PIRSF001549">
    <property type="entry name" value="His-tRNA_synth"/>
    <property type="match status" value="1"/>
</dbReference>
<dbReference type="SUPFAM" id="SSF52954">
    <property type="entry name" value="Class II aaRS ABD-related"/>
    <property type="match status" value="1"/>
</dbReference>
<dbReference type="SUPFAM" id="SSF55681">
    <property type="entry name" value="Class II aaRS and biotin synthetases"/>
    <property type="match status" value="1"/>
</dbReference>
<dbReference type="PROSITE" id="PS50862">
    <property type="entry name" value="AA_TRNA_LIGASE_II"/>
    <property type="match status" value="1"/>
</dbReference>
<name>SYH_SALPA</name>
<feature type="initiator methionine" description="Removed" evidence="1">
    <location>
        <position position="1"/>
    </location>
</feature>
<feature type="chain" id="PRO_0000136243" description="Histidine--tRNA ligase">
    <location>
        <begin position="2"/>
        <end position="424"/>
    </location>
</feature>
<organism>
    <name type="scientific">Salmonella paratyphi A (strain ATCC 9150 / SARB42)</name>
    <dbReference type="NCBI Taxonomy" id="295319"/>
    <lineage>
        <taxon>Bacteria</taxon>
        <taxon>Pseudomonadati</taxon>
        <taxon>Pseudomonadota</taxon>
        <taxon>Gammaproteobacteria</taxon>
        <taxon>Enterobacterales</taxon>
        <taxon>Enterobacteriaceae</taxon>
        <taxon>Salmonella</taxon>
    </lineage>
</organism>
<gene>
    <name evidence="2" type="primary">hisS</name>
    <name type="ordered locus">SPA0345</name>
</gene>
<reference key="1">
    <citation type="journal article" date="2004" name="Nat. Genet.">
        <title>Comparison of genome degradation in Paratyphi A and Typhi, human-restricted serovars of Salmonella enterica that cause typhoid.</title>
        <authorList>
            <person name="McClelland M."/>
            <person name="Sanderson K.E."/>
            <person name="Clifton S.W."/>
            <person name="Latreille P."/>
            <person name="Porwollik S."/>
            <person name="Sabo A."/>
            <person name="Meyer R."/>
            <person name="Bieri T."/>
            <person name="Ozersky P."/>
            <person name="McLellan M."/>
            <person name="Harkins C.R."/>
            <person name="Wang C."/>
            <person name="Nguyen C."/>
            <person name="Berghoff A."/>
            <person name="Elliott G."/>
            <person name="Kohlberg S."/>
            <person name="Strong C."/>
            <person name="Du F."/>
            <person name="Carter J."/>
            <person name="Kremizki C."/>
            <person name="Layman D."/>
            <person name="Leonard S."/>
            <person name="Sun H."/>
            <person name="Fulton L."/>
            <person name="Nash W."/>
            <person name="Miner T."/>
            <person name="Minx P."/>
            <person name="Delehaunty K."/>
            <person name="Fronick C."/>
            <person name="Magrini V."/>
            <person name="Nhan M."/>
            <person name="Warren W."/>
            <person name="Florea L."/>
            <person name="Spieth J."/>
            <person name="Wilson R.K."/>
        </authorList>
    </citation>
    <scope>NUCLEOTIDE SEQUENCE [LARGE SCALE GENOMIC DNA]</scope>
    <source>
        <strain>ATCC 9150 / SARB42</strain>
    </source>
</reference>
<keyword id="KW-0030">Aminoacyl-tRNA synthetase</keyword>
<keyword id="KW-0067">ATP-binding</keyword>
<keyword id="KW-0963">Cytoplasm</keyword>
<keyword id="KW-0436">Ligase</keyword>
<keyword id="KW-0547">Nucleotide-binding</keyword>
<keyword id="KW-0648">Protein biosynthesis</keyword>